<dbReference type="EMBL" id="U82664">
    <property type="protein sequence ID" value="AAB40284.1"/>
    <property type="molecule type" value="Genomic_DNA"/>
</dbReference>
<dbReference type="EMBL" id="U82598">
    <property type="protein sequence ID" value="AAB40729.1"/>
    <property type="molecule type" value="Genomic_DNA"/>
</dbReference>
<dbReference type="EMBL" id="U00096">
    <property type="protein sequence ID" value="AAC73633.1"/>
    <property type="molecule type" value="Genomic_DNA"/>
</dbReference>
<dbReference type="EMBL" id="AP009048">
    <property type="protein sequence ID" value="BAE76308.1"/>
    <property type="molecule type" value="Genomic_DNA"/>
</dbReference>
<dbReference type="PIR" id="B64785">
    <property type="entry name" value="B64785"/>
</dbReference>
<dbReference type="RefSeq" id="NP_415064.1">
    <property type="nucleotide sequence ID" value="NC_000913.3"/>
</dbReference>
<dbReference type="SMR" id="P77249"/>
<dbReference type="BioGRID" id="4263219">
    <property type="interactions" value="117"/>
</dbReference>
<dbReference type="FunCoup" id="P77249">
    <property type="interactions" value="60"/>
</dbReference>
<dbReference type="IntAct" id="P77249">
    <property type="interactions" value="3"/>
</dbReference>
<dbReference type="STRING" id="511145.b0531"/>
<dbReference type="PaxDb" id="511145-b0531"/>
<dbReference type="EnsemblBacteria" id="AAC73633">
    <property type="protein sequence ID" value="AAC73633"/>
    <property type="gene ID" value="b0531"/>
</dbReference>
<dbReference type="GeneID" id="945367"/>
<dbReference type="KEGG" id="ecj:JW0520"/>
<dbReference type="KEGG" id="eco:b0531"/>
<dbReference type="KEGG" id="ecoc:C3026_02605"/>
<dbReference type="PATRIC" id="fig|1411691.4.peg.1747"/>
<dbReference type="EchoBASE" id="EB3641"/>
<dbReference type="eggNOG" id="COG3121">
    <property type="taxonomic scope" value="Bacteria"/>
</dbReference>
<dbReference type="HOGENOM" id="CLU_070768_2_1_6"/>
<dbReference type="InParanoid" id="P77249"/>
<dbReference type="OMA" id="YLINAWI"/>
<dbReference type="OrthoDB" id="9131059at2"/>
<dbReference type="PhylomeDB" id="P77249"/>
<dbReference type="BioCyc" id="EcoCyc:G6291-MONOMER"/>
<dbReference type="PRO" id="PR:P77249"/>
<dbReference type="Proteomes" id="UP000000625">
    <property type="component" value="Chromosome"/>
</dbReference>
<dbReference type="GO" id="GO:0030288">
    <property type="term" value="C:outer membrane-bounded periplasmic space"/>
    <property type="evidence" value="ECO:0000318"/>
    <property type="project" value="GO_Central"/>
</dbReference>
<dbReference type="GO" id="GO:0044183">
    <property type="term" value="F:protein folding chaperone"/>
    <property type="evidence" value="ECO:0000318"/>
    <property type="project" value="GO_Central"/>
</dbReference>
<dbReference type="GO" id="GO:0071555">
    <property type="term" value="P:cell wall organization"/>
    <property type="evidence" value="ECO:0007669"/>
    <property type="project" value="InterPro"/>
</dbReference>
<dbReference type="GO" id="GO:0061077">
    <property type="term" value="P:chaperone-mediated protein folding"/>
    <property type="evidence" value="ECO:0000318"/>
    <property type="project" value="GO_Central"/>
</dbReference>
<dbReference type="FunFam" id="2.60.40.10:FF:000458">
    <property type="entry name" value="Molecular chaperone FimC"/>
    <property type="match status" value="1"/>
</dbReference>
<dbReference type="Gene3D" id="2.60.40.10">
    <property type="entry name" value="Immunoglobulins"/>
    <property type="match status" value="2"/>
</dbReference>
<dbReference type="InterPro" id="IPR013783">
    <property type="entry name" value="Ig-like_fold"/>
</dbReference>
<dbReference type="InterPro" id="IPR008962">
    <property type="entry name" value="PapD-like_sf"/>
</dbReference>
<dbReference type="InterPro" id="IPR050643">
    <property type="entry name" value="Periplasmic_pilus_chap"/>
</dbReference>
<dbReference type="InterPro" id="IPR036316">
    <property type="entry name" value="Pili_assmbl_chap_C_dom_sf"/>
</dbReference>
<dbReference type="InterPro" id="IPR001829">
    <property type="entry name" value="Pili_assmbl_chaperone_bac"/>
</dbReference>
<dbReference type="InterPro" id="IPR016148">
    <property type="entry name" value="Pili_assmbl_chaperone_C"/>
</dbReference>
<dbReference type="InterPro" id="IPR018046">
    <property type="entry name" value="Pili_assmbl_chaperone_CS"/>
</dbReference>
<dbReference type="InterPro" id="IPR016147">
    <property type="entry name" value="Pili_assmbl_chaperone_N"/>
</dbReference>
<dbReference type="NCBIfam" id="NF011742">
    <property type="entry name" value="PRK15195.1"/>
    <property type="match status" value="1"/>
</dbReference>
<dbReference type="PANTHER" id="PTHR30251:SF11">
    <property type="entry name" value="CHAPERONE PROTEIN FIMC-RELATED"/>
    <property type="match status" value="1"/>
</dbReference>
<dbReference type="PANTHER" id="PTHR30251">
    <property type="entry name" value="PILUS ASSEMBLY CHAPERONE"/>
    <property type="match status" value="1"/>
</dbReference>
<dbReference type="Pfam" id="PF02753">
    <property type="entry name" value="PapD_C"/>
    <property type="match status" value="1"/>
</dbReference>
<dbReference type="Pfam" id="PF00345">
    <property type="entry name" value="PapD_N"/>
    <property type="match status" value="1"/>
</dbReference>
<dbReference type="PRINTS" id="PR00969">
    <property type="entry name" value="CHAPERONPILI"/>
</dbReference>
<dbReference type="SUPFAM" id="SSF49354">
    <property type="entry name" value="PapD-like"/>
    <property type="match status" value="1"/>
</dbReference>
<dbReference type="SUPFAM" id="SSF49584">
    <property type="entry name" value="Periplasmic chaperone C-domain"/>
    <property type="match status" value="1"/>
</dbReference>
<dbReference type="PROSITE" id="PS00635">
    <property type="entry name" value="PILI_CHAPERONE"/>
    <property type="match status" value="1"/>
</dbReference>
<organism>
    <name type="scientific">Escherichia coli (strain K12)</name>
    <dbReference type="NCBI Taxonomy" id="83333"/>
    <lineage>
        <taxon>Bacteria</taxon>
        <taxon>Pseudomonadati</taxon>
        <taxon>Pseudomonadota</taxon>
        <taxon>Gammaproteobacteria</taxon>
        <taxon>Enterobacterales</taxon>
        <taxon>Enterobacteriaceae</taxon>
        <taxon>Escherichia</taxon>
    </lineage>
</organism>
<sequence length="230" mass="25458">MMTKIKLLMLIIFYLIISASAHAAGGIALGATRIIYPADAKQTAVWIRNSHTNERFLVNSWIENSSGVKEKSFIITPPLFVSEPKSENTLRIIYTGPPLAADRESLFWMNVKTIPSVDKNALNGRNVLQLAILSRMKLFLRPIQLQELPAEAPDTLKFSRSGNYINVHNPSPFYVTLVNLQVGSQKLGNAMAAPRVNSQIPLPSGVQGKLKFQTVNDYGSVTPVREVNLN</sequence>
<comment type="function">
    <text evidence="2">Part of the sfmACDHF fimbrial operon. Could contribute to adhesion to various surfaces in specific environmental niches. Increases adhesion to eukaryotic T24 bladder epithelial cells in the absence of fim genes.</text>
</comment>
<comment type="subcellular location">
    <subcellularLocation>
        <location evidence="3">Periplasm</location>
    </subcellularLocation>
</comment>
<comment type="induction">
    <text evidence="2">Expression is negatively regulated by H-NS and subjected to cAMP receptor protein (CRP)-mediated catabolite repression.</text>
</comment>
<comment type="disruption phenotype">
    <text evidence="2">Deletion of the operon under classical laboratory conditions does not result in any major effect on E.coli capacity to form biofilms compared with the wild-type strain.</text>
</comment>
<comment type="miscellaneous">
    <text evidence="4">The operon is cryptic under classical laboratory conditions, but is functional when constitutively expressed.</text>
</comment>
<comment type="similarity">
    <text evidence="3">Belongs to the periplasmic pilus chaperone family.</text>
</comment>
<evidence type="ECO:0000255" key="1"/>
<evidence type="ECO:0000269" key="2">
    <source>
    </source>
</evidence>
<evidence type="ECO:0000305" key="3"/>
<evidence type="ECO:0000305" key="4">
    <source>
    </source>
</evidence>
<gene>
    <name type="primary">sfmC</name>
    <name type="ordered locus">b0531</name>
    <name type="ordered locus">JW0520</name>
</gene>
<protein>
    <recommendedName>
        <fullName>Probable fimbrial chaperone SfmC</fullName>
    </recommendedName>
</protein>
<accession>P77249</accession>
<accession>P77077</accession>
<accession>Q2MBP8</accession>
<name>SFMC_ECOLI</name>
<reference key="1">
    <citation type="submission" date="1997-01" db="EMBL/GenBank/DDBJ databases">
        <title>Sequence of minutes 4-25 of Escherichia coli.</title>
        <authorList>
            <person name="Chung E."/>
            <person name="Allen E."/>
            <person name="Araujo R."/>
            <person name="Aparicio A.M."/>
            <person name="Davis K."/>
            <person name="Duncan M."/>
            <person name="Federspiel N."/>
            <person name="Hyman R."/>
            <person name="Kalman S."/>
            <person name="Komp C."/>
            <person name="Kurdi O."/>
            <person name="Lew H."/>
            <person name="Lin D."/>
            <person name="Namath A."/>
            <person name="Oefner P."/>
            <person name="Roberts D."/>
            <person name="Schramm S."/>
            <person name="Davis R.W."/>
        </authorList>
    </citation>
    <scope>NUCLEOTIDE SEQUENCE [LARGE SCALE GENOMIC DNA]</scope>
    <source>
        <strain>K12 / MG1655 / ATCC 47076</strain>
    </source>
</reference>
<reference key="2">
    <citation type="journal article" date="1997" name="Science">
        <title>The complete genome sequence of Escherichia coli K-12.</title>
        <authorList>
            <person name="Blattner F.R."/>
            <person name="Plunkett G. III"/>
            <person name="Bloch C.A."/>
            <person name="Perna N.T."/>
            <person name="Burland V."/>
            <person name="Riley M."/>
            <person name="Collado-Vides J."/>
            <person name="Glasner J.D."/>
            <person name="Rode C.K."/>
            <person name="Mayhew G.F."/>
            <person name="Gregor J."/>
            <person name="Davis N.W."/>
            <person name="Kirkpatrick H.A."/>
            <person name="Goeden M.A."/>
            <person name="Rose D.J."/>
            <person name="Mau B."/>
            <person name="Shao Y."/>
        </authorList>
    </citation>
    <scope>NUCLEOTIDE SEQUENCE [LARGE SCALE GENOMIC DNA]</scope>
    <source>
        <strain>K12 / MG1655 / ATCC 47076</strain>
    </source>
</reference>
<reference key="3">
    <citation type="journal article" date="2006" name="Mol. Syst. Biol.">
        <title>Highly accurate genome sequences of Escherichia coli K-12 strains MG1655 and W3110.</title>
        <authorList>
            <person name="Hayashi K."/>
            <person name="Morooka N."/>
            <person name="Yamamoto Y."/>
            <person name="Fujita K."/>
            <person name="Isono K."/>
            <person name="Choi S."/>
            <person name="Ohtsubo E."/>
            <person name="Baba T."/>
            <person name="Wanner B.L."/>
            <person name="Mori H."/>
            <person name="Horiuchi T."/>
        </authorList>
    </citation>
    <scope>NUCLEOTIDE SEQUENCE [LARGE SCALE GENOMIC DNA]</scope>
    <source>
        <strain>K12 / W3110 / ATCC 27325 / DSM 5911</strain>
    </source>
</reference>
<reference key="4">
    <citation type="journal article" date="2010" name="Environ. Microbiol.">
        <title>Escherichia coli K-12 possesses multiple cryptic but functional chaperone-usher fimbriae with distinct surface specificities.</title>
        <authorList>
            <person name="Korea C.G."/>
            <person name="Badouraly R."/>
            <person name="Prevost M.C."/>
            <person name="Ghigo J.M."/>
            <person name="Beloin C."/>
        </authorList>
    </citation>
    <scope>FUNCTION</scope>
    <scope>INDUCTION</scope>
    <scope>DISRUPTION PHENOTYPE</scope>
    <source>
        <strain>K12 / MG1655 / ATCC 47076</strain>
    </source>
</reference>
<feature type="signal peptide" evidence="1">
    <location>
        <begin position="1"/>
        <end position="23"/>
    </location>
</feature>
<feature type="chain" id="PRO_0000009275" description="Probable fimbrial chaperone SfmC">
    <location>
        <begin position="24"/>
        <end position="230"/>
    </location>
</feature>
<keyword id="KW-0143">Chaperone</keyword>
<keyword id="KW-1029">Fimbrium biogenesis</keyword>
<keyword id="KW-0393">Immunoglobulin domain</keyword>
<keyword id="KW-0574">Periplasm</keyword>
<keyword id="KW-1185">Reference proteome</keyword>
<keyword id="KW-0732">Signal</keyword>
<proteinExistence type="evidence at transcript level"/>